<feature type="signal peptide" evidence="2">
    <location>
        <begin position="1"/>
        <end position="23"/>
    </location>
</feature>
<feature type="chain" id="PRO_0000020082" description="Noelin-3">
    <location>
        <begin position="24"/>
        <end position="478"/>
    </location>
</feature>
<feature type="domain" description="Olfactomedin-like" evidence="3">
    <location>
        <begin position="218"/>
        <end position="470"/>
    </location>
</feature>
<feature type="coiled-coil region" evidence="2">
    <location>
        <begin position="77"/>
        <end position="217"/>
    </location>
</feature>
<feature type="glycosylation site" description="N-linked (GlcNAc...) asparagine" evidence="2">
    <location>
        <position position="33"/>
    </location>
</feature>
<feature type="glycosylation site" description="N-linked (GlcNAc...) asparagine" evidence="2">
    <location>
        <position position="95"/>
    </location>
</feature>
<feature type="glycosylation site" description="N-linked (GlcNAc...) asparagine" evidence="2">
    <location>
        <position position="179"/>
    </location>
</feature>
<feature type="glycosylation site" description="N-linked (GlcNAc...) asparagine" evidence="2">
    <location>
        <position position="299"/>
    </location>
</feature>
<feature type="glycosylation site" description="N-linked (GlcNAc...) asparagine" evidence="2">
    <location>
        <position position="465"/>
    </location>
</feature>
<feature type="disulfide bond" evidence="3">
    <location>
        <begin position="219"/>
        <end position="401"/>
    </location>
</feature>
<feature type="splice variant" id="VSP_011549" description="In isoform 2." evidence="6">
    <original>MSAPLLKLGAVLSTMAMISNWMSQTLPSLVGLNTTRLSAPDTL</original>
    <variation>MQARSSFLNLLLLSLLAGLDPSK</variation>
    <location>
        <begin position="1"/>
        <end position="43"/>
    </location>
</feature>
<sequence length="478" mass="54886">MSAPLLKLGAVLSTMAMISNWMSQTLPSLVGLNTTRLSAPDTLTQISPKEGWQVYSSAQDPDGRCICTVVAPEQNLCSRDAKSRQLRQLLEKVQNMSQSIEVLNLRTQRDFQYVLKMETQMKGLKAKFRQIEDDRKTLMTKHFQELKEKMDELLPLIPVLEQYKTDAKLITQFKEEIRNLSSVLTGIQEEIGAYDYEELHQRVLSLETRLRDCMKKLTCGKLMKITGPITVKTSGTRFGAWMTDPLASEKNNRVWYMDSYTNNKIVREYKSIADFVSGAESRTYNLPFKWAGTNHVVYNGSLYFNKYQSNIIIKYSFDLGRVLAQRSLEYAGFHNVYPYTWGGFSDIDLMADEIGLWAVYATNQNAGNIVISQLNQDTLEVMKSWSTGYPKRSAGESFMICGTLYVTNSHLTGAKVYYSYSTKTSTYEYTDIPFHNQYFHISMLDYNARDRALYAWNNGHQVLFNVTLFHIIKTEDDT</sequence>
<evidence type="ECO:0000250" key="1">
    <source>
        <dbReference type="UniProtKB" id="Q96PB7"/>
    </source>
</evidence>
<evidence type="ECO:0000255" key="2"/>
<evidence type="ECO:0000255" key="3">
    <source>
        <dbReference type="PROSITE-ProRule" id="PRU00446"/>
    </source>
</evidence>
<evidence type="ECO:0000269" key="4">
    <source>
    </source>
</evidence>
<evidence type="ECO:0000269" key="5">
    <source>
    </source>
</evidence>
<evidence type="ECO:0000303" key="6">
    <source>
    </source>
</evidence>
<evidence type="ECO:0000305" key="7">
    <source>
    </source>
</evidence>
<name>NOE3_RAT</name>
<protein>
    <recommendedName>
        <fullName>Noelin-3</fullName>
    </recommendedName>
    <alternativeName>
        <fullName>Olfactomedin-3</fullName>
    </alternativeName>
    <alternativeName>
        <fullName>Optimedin</fullName>
    </alternativeName>
</protein>
<organism>
    <name type="scientific">Rattus norvegicus</name>
    <name type="common">Rat</name>
    <dbReference type="NCBI Taxonomy" id="10116"/>
    <lineage>
        <taxon>Eukaryota</taxon>
        <taxon>Metazoa</taxon>
        <taxon>Chordata</taxon>
        <taxon>Craniata</taxon>
        <taxon>Vertebrata</taxon>
        <taxon>Euteleostomi</taxon>
        <taxon>Mammalia</taxon>
        <taxon>Eutheria</taxon>
        <taxon>Euarchontoglires</taxon>
        <taxon>Glires</taxon>
        <taxon>Rodentia</taxon>
        <taxon>Myomorpha</taxon>
        <taxon>Muroidea</taxon>
        <taxon>Muridae</taxon>
        <taxon>Murinae</taxon>
        <taxon>Rattus</taxon>
    </lineage>
</organism>
<accession>P63057</accession>
<accession>Q8BKV2</accession>
<accession>Q8BLL6</accession>
<accession>Q8QZW0</accession>
<accession>Q8R4K3</accession>
<accession>Q8R4K4</accession>
<reference key="1">
    <citation type="journal article" date="2002" name="Hum. Mol. Genet.">
        <title>Optimedin: a novel olfactomedin-related protein that interacts with myocilin.</title>
        <authorList>
            <person name="Torrado M."/>
            <person name="Trivedi R."/>
            <person name="Zinovieva R."/>
            <person name="Karavanova I."/>
            <person name="Tomarev S.I."/>
        </authorList>
    </citation>
    <scope>NUCLEOTIDE SEQUENCE [MRNA] (ISOFORMS 1 AND 2)</scope>
    <scope>TISSUE SPECIFICITY</scope>
    <scope>INTERACTION WITH MYOC</scope>
    <source>
        <strain>Wistar</strain>
        <tissue>Eye</tissue>
    </source>
</reference>
<reference key="2">
    <citation type="journal article" date="2012" name="Neuron">
        <title>High-resolution proteomics unravel architecture and molecular diversity of native AMPA receptor complexes.</title>
        <authorList>
            <person name="Schwenk J."/>
            <person name="Harmel N."/>
            <person name="Brechet A."/>
            <person name="Zolles G."/>
            <person name="Berkefeld H."/>
            <person name="Muller C.S."/>
            <person name="Bildl W."/>
            <person name="Baehrens D."/>
            <person name="Huber B."/>
            <person name="Kulik A."/>
            <person name="Klocker N."/>
            <person name="Schulte U."/>
            <person name="Fakler B."/>
        </authorList>
    </citation>
    <scope>IDENTIFICATION IN AMPAR COMPLEX</scope>
    <scope>SUBCELLULAR LOCATION</scope>
    <scope>TISSUE SPECIFICITY</scope>
</reference>
<proteinExistence type="evidence at protein level"/>
<comment type="subunit">
    <text evidence="1 4 5">Peripherally associated with AMPAR complex. AMPAR complex consists of an inner core made of 4 pore-forming GluA/GRIA proteins (GRIA1, GRIA2, GRIA3 and GRIA4) and 4 major auxiliary subunits arranged in a twofold symmetry. One of the two pairs of distinct binding sites is occupied either by CNIH2, CNIH3 or CACNG2, CACNG3. The other harbors CACNG2, CACNG3, CACNG4, CACNG8 or GSG1L. This inner core of AMPAR complex is complemented by outer core constituents binding directly to the GluA/GRIA proteins at sites distinct from the interaction sites of the inner core constituents. Outer core constituents include at least PRRT1, PRRT2, CKAMP44/SHISA9, FRRS1L and NRN1. The proteins of the inner and outer core serve as a platform for other, more peripherally associated AMPAR constituents, including OLFM3. Alone or in combination, these auxiliary subunits control the gating and pharmacology of the AMPAR complex and profoundly impact their biogenesis and protein processing (PubMed:22632720). Homodimer. Interacts with MYOC (PubMed:12019210). Interacts with OLFM2 (By similarity).</text>
</comment>
<comment type="subcellular location">
    <subcellularLocation>
        <location evidence="5">Secreted</location>
    </subcellularLocation>
    <subcellularLocation>
        <location evidence="7">Synapse</location>
    </subcellularLocation>
    <text>Isoform 2 is secreted more efficiently than isoform 1.</text>
</comment>
<comment type="alternative products">
    <event type="alternative splicing"/>
    <isoform>
        <id>P63057-1</id>
        <id>Q8QZW0-1</id>
        <name>1</name>
        <name>B</name>
        <sequence type="displayed"/>
    </isoform>
    <isoform>
        <id>P63057-2</id>
        <id>Q8QZW0-2</id>
        <name>2</name>
        <name>A</name>
        <sequence type="described" ref="VSP_011549"/>
    </isoform>
</comment>
<comment type="tissue specificity">
    <text evidence="4 5">Expressed in the brain (at protein level). Also expressed in the retina, mainly in the ganglion cell layer and in the amacrine cell subregion of the inner nuclear layer. Expressed at high levels in the epithelial cells of the posterior iris and the ciliary body and, at lower levels, in the trabecular meshwork. Isoform 2 preferentially expressed in retina and brain, while isoform 1 preferentially expressed in the tissues of the eye angle.</text>
</comment>
<dbReference type="EMBL" id="AF442822">
    <property type="protein sequence ID" value="AAL87041.1"/>
    <property type="molecule type" value="mRNA"/>
</dbReference>
<dbReference type="EMBL" id="AF442823">
    <property type="protein sequence ID" value="AAL87042.1"/>
    <property type="molecule type" value="mRNA"/>
</dbReference>
<dbReference type="RefSeq" id="NP_665720.1">
    <molecule id="P63057-1"/>
    <property type="nucleotide sequence ID" value="NM_145777.2"/>
</dbReference>
<dbReference type="RefSeq" id="XP_017446128.1">
    <property type="nucleotide sequence ID" value="XM_017590639.1"/>
</dbReference>
<dbReference type="SMR" id="P63057"/>
<dbReference type="CORUM" id="P63057"/>
<dbReference type="FunCoup" id="P63057">
    <property type="interactions" value="2073"/>
</dbReference>
<dbReference type="STRING" id="10116.ENSRNOP00000024243"/>
<dbReference type="GlyCosmos" id="P63057">
    <property type="glycosylation" value="5 sites, No reported glycans"/>
</dbReference>
<dbReference type="GlyGen" id="P63057">
    <property type="glycosylation" value="5 sites"/>
</dbReference>
<dbReference type="PhosphoSitePlus" id="P63057"/>
<dbReference type="PaxDb" id="10116-ENSRNOP00000024243"/>
<dbReference type="Ensembl" id="ENSRNOT00000024243.6">
    <molecule id="P63057-1"/>
    <property type="protein sequence ID" value="ENSRNOP00000024243.3"/>
    <property type="gene ID" value="ENSRNOG00000017969.7"/>
</dbReference>
<dbReference type="GeneID" id="252920"/>
<dbReference type="KEGG" id="rno:252920"/>
<dbReference type="UCSC" id="RGD:628672">
    <property type="organism name" value="rat"/>
</dbReference>
<dbReference type="AGR" id="RGD:628672"/>
<dbReference type="CTD" id="118427"/>
<dbReference type="RGD" id="628672">
    <property type="gene designation" value="Olfm3"/>
</dbReference>
<dbReference type="eggNOG" id="KOG3545">
    <property type="taxonomic scope" value="Eukaryota"/>
</dbReference>
<dbReference type="GeneTree" id="ENSGT00940000156998"/>
<dbReference type="HOGENOM" id="CLU_035236_0_0_1"/>
<dbReference type="InParanoid" id="P63057"/>
<dbReference type="OMA" id="XELKEKM"/>
<dbReference type="OrthoDB" id="8626508at2759"/>
<dbReference type="PhylomeDB" id="P63057"/>
<dbReference type="TreeFam" id="TF315964"/>
<dbReference type="PRO" id="PR:P63057"/>
<dbReference type="Proteomes" id="UP000002494">
    <property type="component" value="Chromosome 2"/>
</dbReference>
<dbReference type="Bgee" id="ENSRNOG00000017969">
    <property type="expression patterns" value="Expressed in cerebellum and 2 other cell types or tissues"/>
</dbReference>
<dbReference type="GO" id="GO:0032281">
    <property type="term" value="C:AMPA glutamate receptor complex"/>
    <property type="evidence" value="ECO:0000266"/>
    <property type="project" value="RGD"/>
</dbReference>
<dbReference type="GO" id="GO:0005615">
    <property type="term" value="C:extracellular space"/>
    <property type="evidence" value="ECO:0000266"/>
    <property type="project" value="RGD"/>
</dbReference>
<dbReference type="GO" id="GO:0005794">
    <property type="term" value="C:Golgi apparatus"/>
    <property type="evidence" value="ECO:0000266"/>
    <property type="project" value="RGD"/>
</dbReference>
<dbReference type="GO" id="GO:0045202">
    <property type="term" value="C:synapse"/>
    <property type="evidence" value="ECO:0007669"/>
    <property type="project" value="UniProtKB-SubCell"/>
</dbReference>
<dbReference type="GO" id="GO:0042462">
    <property type="term" value="P:eye photoreceptor cell development"/>
    <property type="evidence" value="ECO:0000314"/>
    <property type="project" value="RGD"/>
</dbReference>
<dbReference type="GO" id="GO:0007165">
    <property type="term" value="P:signal transduction"/>
    <property type="evidence" value="ECO:0000318"/>
    <property type="project" value="GO_Central"/>
</dbReference>
<dbReference type="InterPro" id="IPR022082">
    <property type="entry name" value="Noelin_dom"/>
</dbReference>
<dbReference type="InterPro" id="IPR003112">
    <property type="entry name" value="Olfac-like_dom"/>
</dbReference>
<dbReference type="InterPro" id="IPR050605">
    <property type="entry name" value="Olfactomedin-like_domain"/>
</dbReference>
<dbReference type="InterPro" id="IPR011044">
    <property type="entry name" value="Quino_amine_DH_bsu"/>
</dbReference>
<dbReference type="PANTHER" id="PTHR23192:SF36">
    <property type="entry name" value="NOELIN-3"/>
    <property type="match status" value="1"/>
</dbReference>
<dbReference type="PANTHER" id="PTHR23192">
    <property type="entry name" value="OLFACTOMEDIN-RELATED"/>
    <property type="match status" value="1"/>
</dbReference>
<dbReference type="Pfam" id="PF12308">
    <property type="entry name" value="Noelin-1"/>
    <property type="match status" value="1"/>
</dbReference>
<dbReference type="Pfam" id="PF02191">
    <property type="entry name" value="OLF"/>
    <property type="match status" value="1"/>
</dbReference>
<dbReference type="SMART" id="SM00284">
    <property type="entry name" value="OLF"/>
    <property type="match status" value="1"/>
</dbReference>
<dbReference type="SUPFAM" id="SSF50969">
    <property type="entry name" value="YVTN repeat-like/Quinoprotein amine dehydrogenase"/>
    <property type="match status" value="1"/>
</dbReference>
<dbReference type="PROSITE" id="PS51132">
    <property type="entry name" value="OLF"/>
    <property type="match status" value="1"/>
</dbReference>
<gene>
    <name type="primary">Olfm3</name>
    <name type="synonym">Noe3</name>
</gene>
<keyword id="KW-0025">Alternative splicing</keyword>
<keyword id="KW-0175">Coiled coil</keyword>
<keyword id="KW-1015">Disulfide bond</keyword>
<keyword id="KW-0325">Glycoprotein</keyword>
<keyword id="KW-1185">Reference proteome</keyword>
<keyword id="KW-0964">Secreted</keyword>
<keyword id="KW-0732">Signal</keyword>
<keyword id="KW-0770">Synapse</keyword>